<protein>
    <recommendedName>
        <fullName evidence="1">Dihydroorotate dehydrogenase B (NAD(+)), electron transfer subunit</fullName>
    </recommendedName>
    <alternativeName>
        <fullName evidence="1">Dihydroorotate oxidase B, electron transfer subunit</fullName>
    </alternativeName>
</protein>
<name>PYRK_LYSSC</name>
<organism>
    <name type="scientific">Lysinibacillus sphaericus (strain C3-41)</name>
    <dbReference type="NCBI Taxonomy" id="444177"/>
    <lineage>
        <taxon>Bacteria</taxon>
        <taxon>Bacillati</taxon>
        <taxon>Bacillota</taxon>
        <taxon>Bacilli</taxon>
        <taxon>Bacillales</taxon>
        <taxon>Bacillaceae</taxon>
        <taxon>Lysinibacillus</taxon>
    </lineage>
</organism>
<dbReference type="EMBL" id="CP000817">
    <property type="protein sequence ID" value="ACA39069.1"/>
    <property type="molecule type" value="Genomic_DNA"/>
</dbReference>
<dbReference type="RefSeq" id="WP_012293188.1">
    <property type="nucleotide sequence ID" value="NC_010382.1"/>
</dbReference>
<dbReference type="SMR" id="B1HQC2"/>
<dbReference type="EnsemblBacteria" id="ACA39069">
    <property type="protein sequence ID" value="ACA39069"/>
    <property type="gene ID" value="Bsph_1465"/>
</dbReference>
<dbReference type="KEGG" id="lsp:Bsph_1465"/>
<dbReference type="HOGENOM" id="CLU_003827_1_2_9"/>
<dbReference type="UniPathway" id="UPA00070">
    <property type="reaction ID" value="UER00945"/>
</dbReference>
<dbReference type="Proteomes" id="UP000002164">
    <property type="component" value="Chromosome"/>
</dbReference>
<dbReference type="GO" id="GO:0051537">
    <property type="term" value="F:2 iron, 2 sulfur cluster binding"/>
    <property type="evidence" value="ECO:0007669"/>
    <property type="project" value="UniProtKB-KW"/>
</dbReference>
<dbReference type="GO" id="GO:0009055">
    <property type="term" value="F:electron transfer activity"/>
    <property type="evidence" value="ECO:0007669"/>
    <property type="project" value="UniProtKB-UniRule"/>
</dbReference>
<dbReference type="GO" id="GO:0050660">
    <property type="term" value="F:flavin adenine dinucleotide binding"/>
    <property type="evidence" value="ECO:0007669"/>
    <property type="project" value="InterPro"/>
</dbReference>
<dbReference type="GO" id="GO:0046872">
    <property type="term" value="F:metal ion binding"/>
    <property type="evidence" value="ECO:0007669"/>
    <property type="project" value="UniProtKB-KW"/>
</dbReference>
<dbReference type="GO" id="GO:0016491">
    <property type="term" value="F:oxidoreductase activity"/>
    <property type="evidence" value="ECO:0007669"/>
    <property type="project" value="InterPro"/>
</dbReference>
<dbReference type="GO" id="GO:0044205">
    <property type="term" value="P:'de novo' UMP biosynthetic process"/>
    <property type="evidence" value="ECO:0007669"/>
    <property type="project" value="UniProtKB-UniRule"/>
</dbReference>
<dbReference type="CDD" id="cd06218">
    <property type="entry name" value="DHOD_e_trans"/>
    <property type="match status" value="1"/>
</dbReference>
<dbReference type="FunFam" id="2.10.240.10:FF:000001">
    <property type="entry name" value="Dihydroorotate dehydrogenase B (NAD(+)), electron transfer subunit"/>
    <property type="match status" value="1"/>
</dbReference>
<dbReference type="FunFam" id="3.40.50.80:FF:000017">
    <property type="entry name" value="Dihydroorotate dehydrogenase B (NAD(+)), electron transfer subunit"/>
    <property type="match status" value="1"/>
</dbReference>
<dbReference type="Gene3D" id="2.10.240.10">
    <property type="entry name" value="Dihydroorotate dehydrogenase, electron transfer subunit"/>
    <property type="match status" value="1"/>
</dbReference>
<dbReference type="Gene3D" id="3.40.50.80">
    <property type="entry name" value="Nucleotide-binding domain of ferredoxin-NADP reductase (FNR) module"/>
    <property type="match status" value="1"/>
</dbReference>
<dbReference type="Gene3D" id="2.40.30.10">
    <property type="entry name" value="Translation factors"/>
    <property type="match status" value="1"/>
</dbReference>
<dbReference type="HAMAP" id="MF_01211">
    <property type="entry name" value="DHODB_Fe_S_bind"/>
    <property type="match status" value="1"/>
</dbReference>
<dbReference type="InterPro" id="IPR008333">
    <property type="entry name" value="Cbr1-like_FAD-bd_dom"/>
</dbReference>
<dbReference type="InterPro" id="IPR012165">
    <property type="entry name" value="Cyt_c3_hydrogenase_gsu"/>
</dbReference>
<dbReference type="InterPro" id="IPR037117">
    <property type="entry name" value="Dihydroorotate_DH_ele_sf"/>
</dbReference>
<dbReference type="InterPro" id="IPR019480">
    <property type="entry name" value="Dihydroorotate_DH_Fe-S-bd"/>
</dbReference>
<dbReference type="InterPro" id="IPR023455">
    <property type="entry name" value="Dihydroorotate_DHASE_ETsu"/>
</dbReference>
<dbReference type="InterPro" id="IPR017927">
    <property type="entry name" value="FAD-bd_FR_type"/>
</dbReference>
<dbReference type="InterPro" id="IPR039261">
    <property type="entry name" value="FNR_nucleotide-bd"/>
</dbReference>
<dbReference type="InterPro" id="IPR001433">
    <property type="entry name" value="OxRdtase_FAD/NAD-bd"/>
</dbReference>
<dbReference type="InterPro" id="IPR050353">
    <property type="entry name" value="PyrK_electron_transfer"/>
</dbReference>
<dbReference type="InterPro" id="IPR017938">
    <property type="entry name" value="Riboflavin_synthase-like_b-brl"/>
</dbReference>
<dbReference type="NCBIfam" id="NF000797">
    <property type="entry name" value="PRK00054.1-2"/>
    <property type="match status" value="1"/>
</dbReference>
<dbReference type="NCBIfam" id="NF000799">
    <property type="entry name" value="PRK00054.1-4"/>
    <property type="match status" value="1"/>
</dbReference>
<dbReference type="PANTHER" id="PTHR43513">
    <property type="entry name" value="DIHYDROOROTATE DEHYDROGENASE B (NAD(+)), ELECTRON TRANSFER SUBUNIT"/>
    <property type="match status" value="1"/>
</dbReference>
<dbReference type="PANTHER" id="PTHR43513:SF3">
    <property type="entry name" value="DIHYDROOROTATE DEHYDROGENASE B (NAD(+)), ELECTRON TRANSFER SUBUNIT-RELATED"/>
    <property type="match status" value="1"/>
</dbReference>
<dbReference type="Pfam" id="PF10418">
    <property type="entry name" value="DHODB_Fe-S_bind"/>
    <property type="match status" value="1"/>
</dbReference>
<dbReference type="Pfam" id="PF00970">
    <property type="entry name" value="FAD_binding_6"/>
    <property type="match status" value="1"/>
</dbReference>
<dbReference type="Pfam" id="PF00175">
    <property type="entry name" value="NAD_binding_1"/>
    <property type="match status" value="1"/>
</dbReference>
<dbReference type="PIRSF" id="PIRSF006816">
    <property type="entry name" value="Cyc3_hyd_g"/>
    <property type="match status" value="1"/>
</dbReference>
<dbReference type="PRINTS" id="PR00409">
    <property type="entry name" value="PHDIOXRDTASE"/>
</dbReference>
<dbReference type="SUPFAM" id="SSF52343">
    <property type="entry name" value="Ferredoxin reductase-like, C-terminal NADP-linked domain"/>
    <property type="match status" value="1"/>
</dbReference>
<dbReference type="SUPFAM" id="SSF63380">
    <property type="entry name" value="Riboflavin synthase domain-like"/>
    <property type="match status" value="1"/>
</dbReference>
<dbReference type="PROSITE" id="PS51384">
    <property type="entry name" value="FAD_FR"/>
    <property type="match status" value="1"/>
</dbReference>
<keyword id="KW-0001">2Fe-2S</keyword>
<keyword id="KW-0249">Electron transport</keyword>
<keyword id="KW-0274">FAD</keyword>
<keyword id="KW-0285">Flavoprotein</keyword>
<keyword id="KW-0408">Iron</keyword>
<keyword id="KW-0411">Iron-sulfur</keyword>
<keyword id="KW-0479">Metal-binding</keyword>
<keyword id="KW-0665">Pyrimidine biosynthesis</keyword>
<keyword id="KW-0813">Transport</keyword>
<feature type="chain" id="PRO_1000138911" description="Dihydroorotate dehydrogenase B (NAD(+)), electron transfer subunit">
    <location>
        <begin position="1"/>
        <end position="257"/>
    </location>
</feature>
<feature type="domain" description="FAD-binding FR-type" evidence="1">
    <location>
        <begin position="2"/>
        <end position="101"/>
    </location>
</feature>
<feature type="binding site" evidence="1">
    <location>
        <begin position="52"/>
        <end position="55"/>
    </location>
    <ligand>
        <name>FAD</name>
        <dbReference type="ChEBI" id="CHEBI:57692"/>
    </ligand>
</feature>
<feature type="binding site" evidence="1">
    <location>
        <begin position="69"/>
        <end position="71"/>
    </location>
    <ligand>
        <name>FAD</name>
        <dbReference type="ChEBI" id="CHEBI:57692"/>
    </ligand>
</feature>
<feature type="binding site" evidence="1">
    <location>
        <begin position="76"/>
        <end position="77"/>
    </location>
    <ligand>
        <name>FAD</name>
        <dbReference type="ChEBI" id="CHEBI:57692"/>
    </ligand>
</feature>
<feature type="binding site" evidence="1">
    <location>
        <position position="220"/>
    </location>
    <ligand>
        <name>[2Fe-2S] cluster</name>
        <dbReference type="ChEBI" id="CHEBI:190135"/>
    </ligand>
</feature>
<feature type="binding site" evidence="1">
    <location>
        <position position="225"/>
    </location>
    <ligand>
        <name>[2Fe-2S] cluster</name>
        <dbReference type="ChEBI" id="CHEBI:190135"/>
    </ligand>
</feature>
<feature type="binding site" evidence="1">
    <location>
        <position position="228"/>
    </location>
    <ligand>
        <name>[2Fe-2S] cluster</name>
        <dbReference type="ChEBI" id="CHEBI:190135"/>
    </ligand>
</feature>
<feature type="binding site" evidence="1">
    <location>
        <position position="244"/>
    </location>
    <ligand>
        <name>[2Fe-2S] cluster</name>
        <dbReference type="ChEBI" id="CHEBI:190135"/>
    </ligand>
</feature>
<comment type="function">
    <text evidence="1">Responsible for channeling the electrons from the oxidation of dihydroorotate from the FMN redox center in the PyrD type B subunit to the ultimate electron acceptor NAD(+).</text>
</comment>
<comment type="cofactor">
    <cofactor evidence="1">
        <name>[2Fe-2S] cluster</name>
        <dbReference type="ChEBI" id="CHEBI:190135"/>
    </cofactor>
    <text evidence="1">Binds 1 [2Fe-2S] cluster per subunit.</text>
</comment>
<comment type="cofactor">
    <cofactor evidence="1">
        <name>FAD</name>
        <dbReference type="ChEBI" id="CHEBI:57692"/>
    </cofactor>
    <text evidence="1">Binds 1 FAD per subunit.</text>
</comment>
<comment type="pathway">
    <text evidence="1">Pyrimidine metabolism; UMP biosynthesis via de novo pathway; orotate from (S)-dihydroorotate (NAD(+) route): step 1/1.</text>
</comment>
<comment type="subunit">
    <text evidence="1">Heterotetramer of 2 PyrK and 2 PyrD type B subunits.</text>
</comment>
<comment type="similarity">
    <text evidence="1">Belongs to the PyrK family.</text>
</comment>
<sequence>MIRQEKMRVVSQKQIATNIFELTLHGELVQDMTPGQFVHVKVSDSLEPLLRRPISIANIDKDNNEFTMIYRAEGRGTKVLATNREGQQVNVLGPIGNGFPVDAVKEGGTALLVGGGIGVPPLHELSKQLNARGVKTIHVLGFQTEDVCFYEEEFSALGETHYVTVDGSKGTKGFVTNVLESRAPEFDVFYSCGPLPMLKALEGFYPEKEGYLSFEERMGCGIGACFACVCKTTDQIAKDYVKVCSDGPVFPKGTVAL</sequence>
<proteinExistence type="inferred from homology"/>
<gene>
    <name evidence="1" type="primary">pyrK</name>
    <name type="ordered locus">Bsph_1465</name>
</gene>
<accession>B1HQC2</accession>
<evidence type="ECO:0000255" key="1">
    <source>
        <dbReference type="HAMAP-Rule" id="MF_01211"/>
    </source>
</evidence>
<reference key="1">
    <citation type="journal article" date="2008" name="J. Bacteriol.">
        <title>Complete genome sequence of the mosquitocidal bacterium Bacillus sphaericus C3-41 and comparison with those of closely related Bacillus species.</title>
        <authorList>
            <person name="Hu X."/>
            <person name="Fan W."/>
            <person name="Han B."/>
            <person name="Liu H."/>
            <person name="Zheng D."/>
            <person name="Li Q."/>
            <person name="Dong W."/>
            <person name="Yan J."/>
            <person name="Gao M."/>
            <person name="Berry C."/>
            <person name="Yuan Z."/>
        </authorList>
    </citation>
    <scope>NUCLEOTIDE SEQUENCE [LARGE SCALE GENOMIC DNA]</scope>
    <source>
        <strain>C3-41</strain>
    </source>
</reference>